<feature type="chain" id="PRO_0000054222" description="Uncharacterized transporter YdgF">
    <location>
        <begin position="1"/>
        <end position="458"/>
    </location>
</feature>
<feature type="transmembrane region" description="Helical" evidence="1">
    <location>
        <begin position="26"/>
        <end position="46"/>
    </location>
</feature>
<feature type="transmembrane region" description="Helical" evidence="1">
    <location>
        <begin position="47"/>
        <end position="67"/>
    </location>
</feature>
<feature type="transmembrane region" description="Helical" evidence="1">
    <location>
        <begin position="95"/>
        <end position="115"/>
    </location>
</feature>
<feature type="transmembrane region" description="Helical" evidence="1">
    <location>
        <begin position="125"/>
        <end position="145"/>
    </location>
</feature>
<feature type="transmembrane region" description="Helical" evidence="1">
    <location>
        <begin position="160"/>
        <end position="180"/>
    </location>
</feature>
<feature type="transmembrane region" description="Helical" evidence="1">
    <location>
        <begin position="208"/>
        <end position="228"/>
    </location>
</feature>
<feature type="transmembrane region" description="Helical" evidence="1">
    <location>
        <begin position="251"/>
        <end position="271"/>
    </location>
</feature>
<feature type="transmembrane region" description="Helical" evidence="1">
    <location>
        <begin position="278"/>
        <end position="298"/>
    </location>
</feature>
<feature type="transmembrane region" description="Helical" evidence="1">
    <location>
        <begin position="342"/>
        <end position="362"/>
    </location>
</feature>
<feature type="transmembrane region" description="Helical" evidence="1">
    <location>
        <begin position="365"/>
        <end position="385"/>
    </location>
</feature>
<feature type="transmembrane region" description="Helical" evidence="1">
    <location>
        <begin position="409"/>
        <end position="429"/>
    </location>
</feature>
<feature type="transmembrane region" description="Helical" evidence="1">
    <location>
        <begin position="432"/>
        <end position="452"/>
    </location>
</feature>
<accession>P96704</accession>
<name>YDGF_BACSU</name>
<comment type="function">
    <text>Probable amino-acid or metabolite transport protein.</text>
</comment>
<comment type="subcellular location">
    <subcellularLocation>
        <location evidence="2">Cell membrane</location>
        <topology evidence="2">Multi-pass membrane protein</topology>
    </subcellularLocation>
</comment>
<comment type="similarity">
    <text evidence="2">Belongs to the amino acid-polyamine-organocation (APC) superfamily.</text>
</comment>
<reference key="1">
    <citation type="submission" date="1997-03" db="EMBL/GenBank/DDBJ databases">
        <title>A 148 kbp sequence of the region between 35 and 47 degree of the Bacillus subtilis genome.</title>
        <authorList>
            <person name="Kasahara Y."/>
            <person name="Nakai S."/>
            <person name="Lee S."/>
            <person name="Sadaie Y."/>
            <person name="Ogasawara N."/>
        </authorList>
    </citation>
    <scope>NUCLEOTIDE SEQUENCE [GENOMIC DNA]</scope>
    <source>
        <strain>168</strain>
    </source>
</reference>
<reference key="2">
    <citation type="journal article" date="1997" name="Nature">
        <title>The complete genome sequence of the Gram-positive bacterium Bacillus subtilis.</title>
        <authorList>
            <person name="Kunst F."/>
            <person name="Ogasawara N."/>
            <person name="Moszer I."/>
            <person name="Albertini A.M."/>
            <person name="Alloni G."/>
            <person name="Azevedo V."/>
            <person name="Bertero M.G."/>
            <person name="Bessieres P."/>
            <person name="Bolotin A."/>
            <person name="Borchert S."/>
            <person name="Borriss R."/>
            <person name="Boursier L."/>
            <person name="Brans A."/>
            <person name="Braun M."/>
            <person name="Brignell S.C."/>
            <person name="Bron S."/>
            <person name="Brouillet S."/>
            <person name="Bruschi C.V."/>
            <person name="Caldwell B."/>
            <person name="Capuano V."/>
            <person name="Carter N.M."/>
            <person name="Choi S.-K."/>
            <person name="Codani J.-J."/>
            <person name="Connerton I.F."/>
            <person name="Cummings N.J."/>
            <person name="Daniel R.A."/>
            <person name="Denizot F."/>
            <person name="Devine K.M."/>
            <person name="Duesterhoeft A."/>
            <person name="Ehrlich S.D."/>
            <person name="Emmerson P.T."/>
            <person name="Entian K.-D."/>
            <person name="Errington J."/>
            <person name="Fabret C."/>
            <person name="Ferrari E."/>
            <person name="Foulger D."/>
            <person name="Fritz C."/>
            <person name="Fujita M."/>
            <person name="Fujita Y."/>
            <person name="Fuma S."/>
            <person name="Galizzi A."/>
            <person name="Galleron N."/>
            <person name="Ghim S.-Y."/>
            <person name="Glaser P."/>
            <person name="Goffeau A."/>
            <person name="Golightly E.J."/>
            <person name="Grandi G."/>
            <person name="Guiseppi G."/>
            <person name="Guy B.J."/>
            <person name="Haga K."/>
            <person name="Haiech J."/>
            <person name="Harwood C.R."/>
            <person name="Henaut A."/>
            <person name="Hilbert H."/>
            <person name="Holsappel S."/>
            <person name="Hosono S."/>
            <person name="Hullo M.-F."/>
            <person name="Itaya M."/>
            <person name="Jones L.-M."/>
            <person name="Joris B."/>
            <person name="Karamata D."/>
            <person name="Kasahara Y."/>
            <person name="Klaerr-Blanchard M."/>
            <person name="Klein C."/>
            <person name="Kobayashi Y."/>
            <person name="Koetter P."/>
            <person name="Koningstein G."/>
            <person name="Krogh S."/>
            <person name="Kumano M."/>
            <person name="Kurita K."/>
            <person name="Lapidus A."/>
            <person name="Lardinois S."/>
            <person name="Lauber J."/>
            <person name="Lazarevic V."/>
            <person name="Lee S.-M."/>
            <person name="Levine A."/>
            <person name="Liu H."/>
            <person name="Masuda S."/>
            <person name="Mauel C."/>
            <person name="Medigue C."/>
            <person name="Medina N."/>
            <person name="Mellado R.P."/>
            <person name="Mizuno M."/>
            <person name="Moestl D."/>
            <person name="Nakai S."/>
            <person name="Noback M."/>
            <person name="Noone D."/>
            <person name="O'Reilly M."/>
            <person name="Ogawa K."/>
            <person name="Ogiwara A."/>
            <person name="Oudega B."/>
            <person name="Park S.-H."/>
            <person name="Parro V."/>
            <person name="Pohl T.M."/>
            <person name="Portetelle D."/>
            <person name="Porwollik S."/>
            <person name="Prescott A.M."/>
            <person name="Presecan E."/>
            <person name="Pujic P."/>
            <person name="Purnelle B."/>
            <person name="Rapoport G."/>
            <person name="Rey M."/>
            <person name="Reynolds S."/>
            <person name="Rieger M."/>
            <person name="Rivolta C."/>
            <person name="Rocha E."/>
            <person name="Roche B."/>
            <person name="Rose M."/>
            <person name="Sadaie Y."/>
            <person name="Sato T."/>
            <person name="Scanlan E."/>
            <person name="Schleich S."/>
            <person name="Schroeter R."/>
            <person name="Scoffone F."/>
            <person name="Sekiguchi J."/>
            <person name="Sekowska A."/>
            <person name="Seror S.J."/>
            <person name="Serror P."/>
            <person name="Shin B.-S."/>
            <person name="Soldo B."/>
            <person name="Sorokin A."/>
            <person name="Tacconi E."/>
            <person name="Takagi T."/>
            <person name="Takahashi H."/>
            <person name="Takemaru K."/>
            <person name="Takeuchi M."/>
            <person name="Tamakoshi A."/>
            <person name="Tanaka T."/>
            <person name="Terpstra P."/>
            <person name="Tognoni A."/>
            <person name="Tosato V."/>
            <person name="Uchiyama S."/>
            <person name="Vandenbol M."/>
            <person name="Vannier F."/>
            <person name="Vassarotti A."/>
            <person name="Viari A."/>
            <person name="Wambutt R."/>
            <person name="Wedler E."/>
            <person name="Wedler H."/>
            <person name="Weitzenegger T."/>
            <person name="Winters P."/>
            <person name="Wipat A."/>
            <person name="Yamamoto H."/>
            <person name="Yamane K."/>
            <person name="Yasumoto K."/>
            <person name="Yata K."/>
            <person name="Yoshida K."/>
            <person name="Yoshikawa H.-F."/>
            <person name="Zumstein E."/>
            <person name="Yoshikawa H."/>
            <person name="Danchin A."/>
        </authorList>
    </citation>
    <scope>NUCLEOTIDE SEQUENCE [LARGE SCALE GENOMIC DNA]</scope>
    <source>
        <strain>168</strain>
    </source>
</reference>
<gene>
    <name type="primary">ydgF</name>
    <name type="ordered locus">BSU05620</name>
</gene>
<organism>
    <name type="scientific">Bacillus subtilis (strain 168)</name>
    <dbReference type="NCBI Taxonomy" id="224308"/>
    <lineage>
        <taxon>Bacteria</taxon>
        <taxon>Bacillati</taxon>
        <taxon>Bacillota</taxon>
        <taxon>Bacilli</taxon>
        <taxon>Bacillales</taxon>
        <taxon>Bacillaceae</taxon>
        <taxon>Bacillus</taxon>
    </lineage>
</organism>
<protein>
    <recommendedName>
        <fullName>Uncharacterized transporter YdgF</fullName>
    </recommendedName>
</protein>
<dbReference type="EMBL" id="AB001488">
    <property type="protein sequence ID" value="BAA19395.1"/>
    <property type="molecule type" value="Genomic_DNA"/>
</dbReference>
<dbReference type="EMBL" id="AL009126">
    <property type="protein sequence ID" value="CAB12369.1"/>
    <property type="molecule type" value="Genomic_DNA"/>
</dbReference>
<dbReference type="PIR" id="H69782">
    <property type="entry name" value="H69782"/>
</dbReference>
<dbReference type="RefSeq" id="NP_388443.1">
    <property type="nucleotide sequence ID" value="NC_000964.3"/>
</dbReference>
<dbReference type="RefSeq" id="WP_003234143.1">
    <property type="nucleotide sequence ID" value="NZ_OZ025638.1"/>
</dbReference>
<dbReference type="SMR" id="P96704"/>
<dbReference type="FunCoup" id="P96704">
    <property type="interactions" value="87"/>
</dbReference>
<dbReference type="STRING" id="224308.BSU05620"/>
<dbReference type="TCDB" id="2.A.3.1.16">
    <property type="family name" value="the amino acid-polyamine-organocation (apc) family"/>
</dbReference>
<dbReference type="PaxDb" id="224308-BSU05620"/>
<dbReference type="EnsemblBacteria" id="CAB12369">
    <property type="protein sequence ID" value="CAB12369"/>
    <property type="gene ID" value="BSU_05620"/>
</dbReference>
<dbReference type="GeneID" id="938050"/>
<dbReference type="KEGG" id="bsu:BSU05620"/>
<dbReference type="PATRIC" id="fig|224308.179.peg.604"/>
<dbReference type="eggNOG" id="COG1113">
    <property type="taxonomic scope" value="Bacteria"/>
</dbReference>
<dbReference type="InParanoid" id="P96704"/>
<dbReference type="OrthoDB" id="9780162at2"/>
<dbReference type="PhylomeDB" id="P96704"/>
<dbReference type="BioCyc" id="BSUB:BSU05620-MONOMER"/>
<dbReference type="Proteomes" id="UP000001570">
    <property type="component" value="Chromosome"/>
</dbReference>
<dbReference type="GO" id="GO:0005886">
    <property type="term" value="C:plasma membrane"/>
    <property type="evidence" value="ECO:0007669"/>
    <property type="project" value="UniProtKB-SubCell"/>
</dbReference>
<dbReference type="GO" id="GO:0006865">
    <property type="term" value="P:amino acid transport"/>
    <property type="evidence" value="ECO:0007669"/>
    <property type="project" value="UniProtKB-KW"/>
</dbReference>
<dbReference type="GO" id="GO:0055085">
    <property type="term" value="P:transmembrane transport"/>
    <property type="evidence" value="ECO:0007669"/>
    <property type="project" value="InterPro"/>
</dbReference>
<dbReference type="FunFam" id="1.20.1740.10:FF:000001">
    <property type="entry name" value="Amino acid permease"/>
    <property type="match status" value="1"/>
</dbReference>
<dbReference type="Gene3D" id="1.20.1740.10">
    <property type="entry name" value="Amino acid/polyamine transporter I"/>
    <property type="match status" value="1"/>
</dbReference>
<dbReference type="InterPro" id="IPR004841">
    <property type="entry name" value="AA-permease/SLC12A_dom"/>
</dbReference>
<dbReference type="InterPro" id="IPR004840">
    <property type="entry name" value="Amino_acid_permease_CS"/>
</dbReference>
<dbReference type="PANTHER" id="PTHR43495:SF2">
    <property type="entry name" value="D-SERINE_D-ALANINE_GLYCINE TRANSPORTER"/>
    <property type="match status" value="1"/>
</dbReference>
<dbReference type="PANTHER" id="PTHR43495">
    <property type="entry name" value="GABA PERMEASE"/>
    <property type="match status" value="1"/>
</dbReference>
<dbReference type="Pfam" id="PF00324">
    <property type="entry name" value="AA_permease"/>
    <property type="match status" value="1"/>
</dbReference>
<dbReference type="PIRSF" id="PIRSF006060">
    <property type="entry name" value="AA_transporter"/>
    <property type="match status" value="1"/>
</dbReference>
<dbReference type="PROSITE" id="PS00218">
    <property type="entry name" value="AMINO_ACID_PERMEASE_1"/>
    <property type="match status" value="1"/>
</dbReference>
<evidence type="ECO:0000255" key="1"/>
<evidence type="ECO:0000305" key="2"/>
<proteinExistence type="inferred from homology"/>
<keyword id="KW-0029">Amino-acid transport</keyword>
<keyword id="KW-1003">Cell membrane</keyword>
<keyword id="KW-0472">Membrane</keyword>
<keyword id="KW-1185">Reference proteome</keyword>
<keyword id="KW-0812">Transmembrane</keyword>
<keyword id="KW-1133">Transmembrane helix</keyword>
<keyword id="KW-0813">Transport</keyword>
<sequence length="458" mass="50790">MTDDMTKDNINQQTLQRGLKNRHIQLIAIGGAIGTGLFLGSGKSIHFAGPSILFAYMITGIICFLIMRSLGELLLSNLNYHSFVDFVQDYLGDMAAFITGWTYWFCWISIAMADLTAVGLYTQYWLPGVPQWVPGLIALIILLIMNLATVKLFGELEFWFALIKVIAILALIVIGLVMIFKGFSTSSGVSSFTNLWSHGGLFPNGMHGFILSFQMVVFAFVGIELVGLTAGETENPEKVIPKAINNIPVRVLLFYIGALLVIMSIYPWDIINPSESPFVQVFVAVGIVGAASIINFVVLTSAASACNSAVFSTSRMVYSLAKDHNAPESMAKLTQRKVPRNALFFSAIVILIGVTLNYIMPEGVFTLITSISTVCFIYIWGITVICHMKYRKTRPELAKTNKFKLPLYPFTNYLILAFLAFVLVVLALAQDTRVSLFVTPVWFILLIVIYKVRKAKHQ</sequence>